<sequence length="557" mass="59189">MAAQGFLLIATFLLVLMVLARPLGSGLARLINDIPLPGTTGVERVLFRALGVSDREMNWKQYLCAILGLNMLGLAVLFFMLLGQHYLPLNPQQLPGLSWDLALNTAVSFVTNTNWQSYSGETTLSYFSQMAGLTVQNFLSAASGIAVIFALIRAFTRQSMSTLGNAWVDLLRITLWVLVPVALLIALFFIQQGALQNFLPYQAVNTVEGAQQLLPMGPVASQEAIKMLGTNGGGFFNANSSHPFENPTALTNFVQMLAIFLIPTALCFAFGEVMGDRRQGRMLLWAMSVIFVICVGVVMWAEVQGNPHLLALGTDSSINMEGKESRFGVLVSSLFAVVTTAASCGAVIAMHDSFTALGGMVPMWLMQIGEVVFGGVGSGLYGMMLFVLLAVFIAGLMIGRTPEYLGKKIDVREMKLTALAILVTPTLVLMGAALAMMTDAGRSAMLNPGPHGFSEVLYAVSSAANNNGSAFAGLSANSPFWNCLLAFCMFVGRFGVIIPVMAIAGSLVSKKSQAASSGTLPTHGPLFVGLLIGTVLLVGALTFIPALALGPVAEYLS</sequence>
<protein>
    <recommendedName>
        <fullName evidence="1">Potassium-transporting ATPase potassium-binding subunit</fullName>
    </recommendedName>
    <alternativeName>
        <fullName evidence="1">ATP phosphohydrolase [potassium-transporting] A chain</fullName>
    </alternativeName>
    <alternativeName>
        <fullName evidence="1">Potassium-binding and translocating subunit A</fullName>
    </alternativeName>
    <alternativeName>
        <fullName evidence="1">Potassium-translocating ATPase A chain</fullName>
    </alternativeName>
</protein>
<keyword id="KW-0002">3D-structure</keyword>
<keyword id="KW-0997">Cell inner membrane</keyword>
<keyword id="KW-1003">Cell membrane</keyword>
<keyword id="KW-0406">Ion transport</keyword>
<keyword id="KW-0472">Membrane</keyword>
<keyword id="KW-0630">Potassium</keyword>
<keyword id="KW-0633">Potassium transport</keyword>
<keyword id="KW-1185">Reference proteome</keyword>
<keyword id="KW-0812">Transmembrane</keyword>
<keyword id="KW-1133">Transmembrane helix</keyword>
<keyword id="KW-0813">Transport</keyword>
<proteinExistence type="evidence at protein level"/>
<name>KDPA_ECOLI</name>
<evidence type="ECO:0000255" key="1">
    <source>
        <dbReference type="HAMAP-Rule" id="MF_00275"/>
    </source>
</evidence>
<evidence type="ECO:0000269" key="2">
    <source>
    </source>
</evidence>
<evidence type="ECO:0000269" key="3">
    <source>
    </source>
</evidence>
<evidence type="ECO:0000269" key="4">
    <source>
    </source>
</evidence>
<evidence type="ECO:0000269" key="5">
    <source>
    </source>
</evidence>
<evidence type="ECO:0000269" key="6">
    <source>
    </source>
</evidence>
<evidence type="ECO:0000269" key="7">
    <source>
    </source>
</evidence>
<evidence type="ECO:0000269" key="8">
    <source>
    </source>
</evidence>
<evidence type="ECO:0000269" key="9">
    <source>
    </source>
</evidence>
<evidence type="ECO:0000269" key="10">
    <source>
    </source>
</evidence>
<evidence type="ECO:0000269" key="11">
    <source>
    </source>
</evidence>
<evidence type="ECO:0000269" key="12">
    <source>
    </source>
</evidence>
<evidence type="ECO:0000269" key="13">
    <source>
    </source>
</evidence>
<evidence type="ECO:0000269" key="14">
    <source>
    </source>
</evidence>
<evidence type="ECO:0000305" key="15">
    <source>
    </source>
</evidence>
<evidence type="ECO:0007744" key="16">
    <source>
        <dbReference type="PDB" id="5MRW"/>
    </source>
</evidence>
<evidence type="ECO:0007744" key="17">
    <source>
        <dbReference type="PDB" id="6HRA"/>
    </source>
</evidence>
<evidence type="ECO:0007744" key="18">
    <source>
        <dbReference type="PDB" id="6HRB"/>
    </source>
</evidence>
<evidence type="ECO:0007744" key="19">
    <source>
        <dbReference type="PDB" id="7BGY"/>
    </source>
</evidence>
<evidence type="ECO:0007744" key="20">
    <source>
        <dbReference type="PDB" id="7BH1"/>
    </source>
</evidence>
<evidence type="ECO:0007744" key="21">
    <source>
        <dbReference type="PDB" id="7BH2"/>
    </source>
</evidence>
<evidence type="ECO:0007744" key="22">
    <source>
        <dbReference type="PDB" id="7LC3"/>
    </source>
</evidence>
<evidence type="ECO:0007744" key="23">
    <source>
        <dbReference type="PDB" id="7LC6"/>
    </source>
</evidence>
<evidence type="ECO:0007829" key="24">
    <source>
        <dbReference type="PDB" id="5MRW"/>
    </source>
</evidence>
<evidence type="ECO:0007829" key="25">
    <source>
        <dbReference type="PDB" id="7BH2"/>
    </source>
</evidence>
<evidence type="ECO:0007829" key="26">
    <source>
        <dbReference type="PDB" id="7LC3"/>
    </source>
</evidence>
<evidence type="ECO:0007829" key="27">
    <source>
        <dbReference type="PDB" id="7NNL"/>
    </source>
</evidence>
<evidence type="ECO:0007829" key="28">
    <source>
        <dbReference type="PDB" id="7ZRI"/>
    </source>
</evidence>
<dbReference type="EMBL" id="K02670">
    <property type="protein sequence ID" value="AAB96335.1"/>
    <property type="molecule type" value="Genomic_DNA"/>
</dbReference>
<dbReference type="EMBL" id="U00096">
    <property type="protein sequence ID" value="AAC73792.1"/>
    <property type="molecule type" value="Genomic_DNA"/>
</dbReference>
<dbReference type="EMBL" id="AP009048">
    <property type="protein sequence ID" value="BAA35356.1"/>
    <property type="molecule type" value="Genomic_DNA"/>
</dbReference>
<dbReference type="PIR" id="A01071">
    <property type="entry name" value="PWECAK"/>
</dbReference>
<dbReference type="RefSeq" id="NP_415226.1">
    <property type="nucleotide sequence ID" value="NC_000913.3"/>
</dbReference>
<dbReference type="RefSeq" id="WP_000741129.1">
    <property type="nucleotide sequence ID" value="NZ_LN832404.1"/>
</dbReference>
<dbReference type="PDB" id="5MRW">
    <property type="method" value="X-ray"/>
    <property type="resolution" value="2.90 A"/>
    <property type="chains" value="A/E/I=1-557"/>
</dbReference>
<dbReference type="PDB" id="6HRA">
    <property type="method" value="EM"/>
    <property type="resolution" value="3.70 A"/>
    <property type="chains" value="A=1-557"/>
</dbReference>
<dbReference type="PDB" id="6HRB">
    <property type="method" value="EM"/>
    <property type="resolution" value="4.00 A"/>
    <property type="chains" value="A=1-557"/>
</dbReference>
<dbReference type="PDB" id="7BGY">
    <property type="method" value="EM"/>
    <property type="resolution" value="2.90 A"/>
    <property type="chains" value="A=1-557"/>
</dbReference>
<dbReference type="PDB" id="7BH1">
    <property type="method" value="EM"/>
    <property type="resolution" value="3.38 A"/>
    <property type="chains" value="A=1-557"/>
</dbReference>
<dbReference type="PDB" id="7BH2">
    <property type="method" value="EM"/>
    <property type="resolution" value="3.00 A"/>
    <property type="chains" value="A=1-557"/>
</dbReference>
<dbReference type="PDB" id="7LC3">
    <property type="method" value="EM"/>
    <property type="resolution" value="3.23 A"/>
    <property type="chains" value="A=1-557"/>
</dbReference>
<dbReference type="PDB" id="7LC6">
    <property type="method" value="EM"/>
    <property type="resolution" value="3.70 A"/>
    <property type="chains" value="A=1-557"/>
</dbReference>
<dbReference type="PDB" id="7NNL">
    <property type="method" value="EM"/>
    <property type="resolution" value="3.10 A"/>
    <property type="chains" value="A=1-557"/>
</dbReference>
<dbReference type="PDB" id="7NNP">
    <property type="method" value="EM"/>
    <property type="resolution" value="3.20 A"/>
    <property type="chains" value="A=1-557"/>
</dbReference>
<dbReference type="PDB" id="7ZRD">
    <property type="method" value="EM"/>
    <property type="resolution" value="3.30 A"/>
    <property type="chains" value="A=1-557"/>
</dbReference>
<dbReference type="PDB" id="7ZRE">
    <property type="method" value="EM"/>
    <property type="resolution" value="3.40 A"/>
    <property type="chains" value="A=1-557"/>
</dbReference>
<dbReference type="PDB" id="7ZRG">
    <property type="method" value="EM"/>
    <property type="resolution" value="3.50 A"/>
    <property type="chains" value="A=1-557"/>
</dbReference>
<dbReference type="PDB" id="7ZRH">
    <property type="method" value="EM"/>
    <property type="resolution" value="3.40 A"/>
    <property type="chains" value="A=1-557"/>
</dbReference>
<dbReference type="PDB" id="7ZRI">
    <property type="method" value="EM"/>
    <property type="resolution" value="3.50 A"/>
    <property type="chains" value="A=1-557"/>
</dbReference>
<dbReference type="PDB" id="7ZRJ">
    <property type="method" value="EM"/>
    <property type="resolution" value="3.70 A"/>
    <property type="chains" value="A=1-557"/>
</dbReference>
<dbReference type="PDB" id="7ZRK">
    <property type="method" value="EM"/>
    <property type="resolution" value="3.10 A"/>
    <property type="chains" value="A=1-557"/>
</dbReference>
<dbReference type="PDB" id="7ZRL">
    <property type="method" value="EM"/>
    <property type="resolution" value="4.00 A"/>
    <property type="chains" value="A=1-557"/>
</dbReference>
<dbReference type="PDB" id="7ZRM">
    <property type="method" value="EM"/>
    <property type="resolution" value="3.70 A"/>
    <property type="chains" value="A=1-557"/>
</dbReference>
<dbReference type="PDBsum" id="5MRW"/>
<dbReference type="PDBsum" id="6HRA"/>
<dbReference type="PDBsum" id="6HRB"/>
<dbReference type="PDBsum" id="7BGY"/>
<dbReference type="PDBsum" id="7BH1"/>
<dbReference type="PDBsum" id="7BH2"/>
<dbReference type="PDBsum" id="7LC3"/>
<dbReference type="PDBsum" id="7LC6"/>
<dbReference type="PDBsum" id="7NNL"/>
<dbReference type="PDBsum" id="7NNP"/>
<dbReference type="PDBsum" id="7ZRD"/>
<dbReference type="PDBsum" id="7ZRE"/>
<dbReference type="PDBsum" id="7ZRG"/>
<dbReference type="PDBsum" id="7ZRH"/>
<dbReference type="PDBsum" id="7ZRI"/>
<dbReference type="PDBsum" id="7ZRJ"/>
<dbReference type="PDBsum" id="7ZRK"/>
<dbReference type="PDBsum" id="7ZRL"/>
<dbReference type="PDBsum" id="7ZRM"/>
<dbReference type="EMDB" id="EMD-0257"/>
<dbReference type="EMDB" id="EMD-0258"/>
<dbReference type="EMDB" id="EMD-12184"/>
<dbReference type="EMDB" id="EMD-12185"/>
<dbReference type="EMDB" id="EMD-12186"/>
<dbReference type="EMDB" id="EMD-14911"/>
<dbReference type="EMDB" id="EMD-14912"/>
<dbReference type="EMDB" id="EMD-14913"/>
<dbReference type="EMDB" id="EMD-14914"/>
<dbReference type="EMDB" id="EMD-14915"/>
<dbReference type="EMDB" id="EMD-14916"/>
<dbReference type="EMDB" id="EMD-14917"/>
<dbReference type="EMDB" id="EMD-14918"/>
<dbReference type="EMDB" id="EMD-14919"/>
<dbReference type="EMDB" id="EMD-23268"/>
<dbReference type="EMDB" id="EMD-23269"/>
<dbReference type="EMDB" id="EMD-23342"/>
<dbReference type="EMDB" id="EMD-23343"/>
<dbReference type="EMDB" id="EMD-23344"/>
<dbReference type="EMDB" id="EMD-23346"/>
<dbReference type="EMDB" id="EMD-23347"/>
<dbReference type="EMDB" id="EMD-23348"/>
<dbReference type="EMDB" id="EMD-23349"/>
<dbReference type="EMDB" id="EMD-23353"/>
<dbReference type="EMDB" id="EMD-23354"/>
<dbReference type="SMR" id="P03959"/>
<dbReference type="BioGRID" id="4259932">
    <property type="interactions" value="35"/>
</dbReference>
<dbReference type="BioGRID" id="850406">
    <property type="interactions" value="1"/>
</dbReference>
<dbReference type="ComplexPortal" id="CPX-3564">
    <property type="entry name" value="KdpFABC potassium import complex"/>
</dbReference>
<dbReference type="FunCoup" id="P03959">
    <property type="interactions" value="496"/>
</dbReference>
<dbReference type="IntAct" id="P03959">
    <property type="interactions" value="3"/>
</dbReference>
<dbReference type="STRING" id="511145.b0698"/>
<dbReference type="TCDB" id="3.A.3.7.1">
    <property type="family name" value="the p-type atpase (p-atpase) superfamily"/>
</dbReference>
<dbReference type="PaxDb" id="511145-b0698"/>
<dbReference type="DNASU" id="946045"/>
<dbReference type="EnsemblBacteria" id="AAC73792">
    <property type="protein sequence ID" value="AAC73792"/>
    <property type="gene ID" value="b0698"/>
</dbReference>
<dbReference type="GeneID" id="946045"/>
<dbReference type="KEGG" id="ecj:JW0686"/>
<dbReference type="KEGG" id="eco:b0698"/>
<dbReference type="KEGG" id="ecoc:C3026_03485"/>
<dbReference type="PATRIC" id="fig|1411691.4.peg.1577"/>
<dbReference type="EchoBASE" id="EB0508"/>
<dbReference type="eggNOG" id="COG2060">
    <property type="taxonomic scope" value="Bacteria"/>
</dbReference>
<dbReference type="HOGENOM" id="CLU_018614_3_0_6"/>
<dbReference type="InParanoid" id="P03959"/>
<dbReference type="OMA" id="WQNYGGE"/>
<dbReference type="OrthoDB" id="9763796at2"/>
<dbReference type="PhylomeDB" id="P03959"/>
<dbReference type="BioCyc" id="EcoCyc:EG10513-MONOMER"/>
<dbReference type="BioCyc" id="MetaCyc:EG10513-MONOMER"/>
<dbReference type="BRENDA" id="7.2.2.6">
    <property type="organism ID" value="2026"/>
</dbReference>
<dbReference type="PRO" id="PR:P03959"/>
<dbReference type="Proteomes" id="UP000000625">
    <property type="component" value="Chromosome"/>
</dbReference>
<dbReference type="GO" id="GO:0005886">
    <property type="term" value="C:plasma membrane"/>
    <property type="evidence" value="ECO:0000314"/>
    <property type="project" value="EcoCyc"/>
</dbReference>
<dbReference type="GO" id="GO:0031004">
    <property type="term" value="C:potassium ion-transporting ATPase complex"/>
    <property type="evidence" value="ECO:0000314"/>
    <property type="project" value="EcoCyc"/>
</dbReference>
<dbReference type="GO" id="GO:1903103">
    <property type="term" value="C:potassium:proton antiporter complex"/>
    <property type="evidence" value="ECO:0000353"/>
    <property type="project" value="ComplexPortal"/>
</dbReference>
<dbReference type="GO" id="GO:0008556">
    <property type="term" value="F:P-type potassium transmembrane transporter activity"/>
    <property type="evidence" value="ECO:0000314"/>
    <property type="project" value="EcoCyc"/>
</dbReference>
<dbReference type="GO" id="GO:0030955">
    <property type="term" value="F:potassium ion binding"/>
    <property type="evidence" value="ECO:0007669"/>
    <property type="project" value="UniProtKB-UniRule"/>
</dbReference>
<dbReference type="GO" id="GO:0098655">
    <property type="term" value="P:monoatomic cation transmembrane transport"/>
    <property type="evidence" value="ECO:0000314"/>
    <property type="project" value="EcoCyc"/>
</dbReference>
<dbReference type="GO" id="GO:0071805">
    <property type="term" value="P:potassium ion transmembrane transport"/>
    <property type="evidence" value="ECO:0000314"/>
    <property type="project" value="EcoCyc"/>
</dbReference>
<dbReference type="GO" id="GO:0006813">
    <property type="term" value="P:potassium ion transport"/>
    <property type="evidence" value="ECO:0000314"/>
    <property type="project" value="ComplexPortal"/>
</dbReference>
<dbReference type="HAMAP" id="MF_00275">
    <property type="entry name" value="KdpA"/>
    <property type="match status" value="1"/>
</dbReference>
<dbReference type="InterPro" id="IPR004623">
    <property type="entry name" value="KdpA"/>
</dbReference>
<dbReference type="NCBIfam" id="TIGR00680">
    <property type="entry name" value="kdpA"/>
    <property type="match status" value="1"/>
</dbReference>
<dbReference type="PANTHER" id="PTHR30607">
    <property type="entry name" value="POTASSIUM-TRANSPORTING ATPASE A CHAIN"/>
    <property type="match status" value="1"/>
</dbReference>
<dbReference type="PANTHER" id="PTHR30607:SF2">
    <property type="entry name" value="POTASSIUM-TRANSPORTING ATPASE POTASSIUM-BINDING SUBUNIT"/>
    <property type="match status" value="1"/>
</dbReference>
<dbReference type="Pfam" id="PF03814">
    <property type="entry name" value="KdpA"/>
    <property type="match status" value="1"/>
</dbReference>
<dbReference type="PIRSF" id="PIRSF001294">
    <property type="entry name" value="K_ATPaseA"/>
    <property type="match status" value="1"/>
</dbReference>
<gene>
    <name evidence="1" type="primary">kdpA</name>
    <name type="ordered locus">b0698</name>
    <name type="ordered locus">JW0686</name>
</gene>
<organism>
    <name type="scientific">Escherichia coli (strain K12)</name>
    <dbReference type="NCBI Taxonomy" id="83333"/>
    <lineage>
        <taxon>Bacteria</taxon>
        <taxon>Pseudomonadati</taxon>
        <taxon>Pseudomonadota</taxon>
        <taxon>Gammaproteobacteria</taxon>
        <taxon>Enterobacterales</taxon>
        <taxon>Enterobacteriaceae</taxon>
        <taxon>Escherichia</taxon>
    </lineage>
</organism>
<feature type="chain" id="PRO_0000166494" description="Potassium-transporting ATPase potassium-binding subunit">
    <location>
        <begin position="1"/>
        <end position="557"/>
    </location>
</feature>
<feature type="topological domain" description="Periplasmic" evidence="9 15">
    <location>
        <begin position="1"/>
        <end position="2"/>
    </location>
</feature>
<feature type="transmembrane region" description="Helical" evidence="9 16">
    <location>
        <begin position="3"/>
        <end position="27"/>
    </location>
</feature>
<feature type="topological domain" description="Cytoplasmic" evidence="9 15">
    <location>
        <begin position="28"/>
        <end position="61"/>
    </location>
</feature>
<feature type="transmembrane region" description="Helical" evidence="9 16">
    <location>
        <begin position="62"/>
        <end position="84"/>
    </location>
</feature>
<feature type="topological domain" description="Periplasmic" evidence="9 15">
    <location>
        <begin position="85"/>
        <end position="125"/>
    </location>
</feature>
<feature type="transmembrane region" description="Helical" evidence="9 16">
    <location>
        <begin position="126"/>
        <end position="149"/>
    </location>
</feature>
<feature type="topological domain" description="Cytoplasmic" evidence="9 15">
    <location>
        <begin position="150"/>
        <end position="165"/>
    </location>
</feature>
<feature type="transmembrane region" description="Helical" evidence="9 16">
    <location>
        <begin position="166"/>
        <end position="192"/>
    </location>
</feature>
<feature type="topological domain" description="Periplasmic" evidence="9 15">
    <location>
        <begin position="193"/>
        <end position="249"/>
    </location>
</feature>
<feature type="transmembrane region" description="Helical" evidence="9 16">
    <location>
        <begin position="250"/>
        <end position="269"/>
    </location>
</feature>
<feature type="topological domain" description="Cytoplasmic" evidence="9 15">
    <location>
        <begin position="270"/>
        <end position="279"/>
    </location>
</feature>
<feature type="transmembrane region" description="Helical" evidence="9 16">
    <location>
        <begin position="280"/>
        <end position="300"/>
    </location>
</feature>
<feature type="topological domain" description="Periplasmic" evidence="9 15">
    <location>
        <begin position="301"/>
        <end position="356"/>
    </location>
</feature>
<feature type="transmembrane region" description="Helical" evidence="9 16">
    <location>
        <begin position="357"/>
        <end position="368"/>
    </location>
</feature>
<feature type="topological domain" description="Cytoplasmic" evidence="9 15">
    <location>
        <begin position="369"/>
        <end position="414"/>
    </location>
</feature>
<feature type="transmembrane region" description="Helical" evidence="9 16">
    <location>
        <begin position="415"/>
        <end position="435"/>
    </location>
</feature>
<feature type="topological domain" description="Periplasmic" evidence="9 15">
    <location>
        <begin position="436"/>
        <end position="479"/>
    </location>
</feature>
<feature type="transmembrane region" description="Helical" evidence="9 16">
    <location>
        <begin position="480"/>
        <end position="501"/>
    </location>
</feature>
<feature type="topological domain" description="Cytoplasmic" evidence="9 15">
    <location>
        <begin position="502"/>
        <end position="524"/>
    </location>
</feature>
<feature type="transmembrane region" description="Helical" evidence="9 16">
    <location>
        <begin position="525"/>
        <end position="552"/>
    </location>
</feature>
<feature type="topological domain" description="Periplasmic" evidence="9 15">
    <location>
        <begin position="553"/>
        <end position="557"/>
    </location>
</feature>
<feature type="mutagenesis site" description="Decrease in K(+) affinity and loss of cation selectivity." evidence="3">
    <original>G</original>
    <variation>A</variation>
    <variation>S</variation>
    <location>
        <position position="232"/>
    </location>
</feature>
<feature type="helix" evidence="24">
    <location>
        <begin position="2"/>
        <end position="31"/>
    </location>
</feature>
<feature type="strand" evidence="28">
    <location>
        <begin position="32"/>
        <end position="34"/>
    </location>
</feature>
<feature type="turn" evidence="26">
    <location>
        <begin position="37"/>
        <end position="39"/>
    </location>
</feature>
<feature type="helix" evidence="24">
    <location>
        <begin position="41"/>
        <end position="50"/>
    </location>
</feature>
<feature type="helix" evidence="24">
    <location>
        <begin position="59"/>
        <end position="82"/>
    </location>
</feature>
<feature type="turn" evidence="24">
    <location>
        <begin position="83"/>
        <end position="86"/>
    </location>
</feature>
<feature type="helix" evidence="24">
    <location>
        <begin position="99"/>
        <end position="110"/>
    </location>
</feature>
<feature type="helix" evidence="24">
    <location>
        <begin position="120"/>
        <end position="123"/>
    </location>
</feature>
<feature type="helix" evidence="24">
    <location>
        <begin position="126"/>
        <end position="130"/>
    </location>
</feature>
<feature type="helix" evidence="24">
    <location>
        <begin position="133"/>
        <end position="156"/>
    </location>
</feature>
<feature type="helix" evidence="24">
    <location>
        <begin position="166"/>
        <end position="176"/>
    </location>
</feature>
<feature type="helix" evidence="24">
    <location>
        <begin position="178"/>
        <end position="192"/>
    </location>
</feature>
<feature type="strand" evidence="24">
    <location>
        <begin position="202"/>
        <end position="205"/>
    </location>
</feature>
<feature type="strand" evidence="24">
    <location>
        <begin position="207"/>
        <end position="209"/>
    </location>
</feature>
<feature type="strand" evidence="24">
    <location>
        <begin position="211"/>
        <end position="214"/>
    </location>
</feature>
<feature type="helix" evidence="24">
    <location>
        <begin position="219"/>
        <end position="228"/>
    </location>
</feature>
<feature type="strand" evidence="24">
    <location>
        <begin position="235"/>
        <end position="238"/>
    </location>
</feature>
<feature type="turn" evidence="24">
    <location>
        <begin position="239"/>
        <end position="241"/>
    </location>
</feature>
<feature type="turn" evidence="24">
    <location>
        <begin position="243"/>
        <end position="245"/>
    </location>
</feature>
<feature type="helix" evidence="24">
    <location>
        <begin position="249"/>
        <end position="273"/>
    </location>
</feature>
<feature type="helix" evidence="24">
    <location>
        <begin position="278"/>
        <end position="304"/>
    </location>
</feature>
<feature type="helix" evidence="24">
    <location>
        <begin position="307"/>
        <end position="311"/>
    </location>
</feature>
<feature type="strand" evidence="25">
    <location>
        <begin position="321"/>
        <end position="323"/>
    </location>
</feature>
<feature type="strand" evidence="24">
    <location>
        <begin position="325"/>
        <end position="327"/>
    </location>
</feature>
<feature type="helix" evidence="24">
    <location>
        <begin position="329"/>
        <end position="341"/>
    </location>
</feature>
<feature type="helix" evidence="24">
    <location>
        <begin position="351"/>
        <end position="353"/>
    </location>
</feature>
<feature type="helix" evidence="24">
    <location>
        <begin position="356"/>
        <end position="367"/>
    </location>
</feature>
<feature type="turn" evidence="27">
    <location>
        <begin position="371"/>
        <end position="374"/>
    </location>
</feature>
<feature type="turn" evidence="24">
    <location>
        <begin position="375"/>
        <end position="377"/>
    </location>
</feature>
<feature type="helix" evidence="24">
    <location>
        <begin position="378"/>
        <end position="398"/>
    </location>
</feature>
<feature type="helix" evidence="24">
    <location>
        <begin position="411"/>
        <end position="435"/>
    </location>
</feature>
<feature type="helix" evidence="24">
    <location>
        <begin position="439"/>
        <end position="442"/>
    </location>
</feature>
<feature type="helix" evidence="24">
    <location>
        <begin position="450"/>
        <end position="464"/>
    </location>
</feature>
<feature type="helix" evidence="24">
    <location>
        <begin position="479"/>
        <end position="508"/>
    </location>
</feature>
<feature type="strand" evidence="27">
    <location>
        <begin position="517"/>
        <end position="519"/>
    </location>
</feature>
<feature type="helix" evidence="24">
    <location>
        <begin position="524"/>
        <end position="548"/>
    </location>
</feature>
<feature type="helix" evidence="24">
    <location>
        <begin position="551"/>
        <end position="556"/>
    </location>
</feature>
<comment type="function">
    <text evidence="7 8 10 11 12 13">Part of the high-affinity ATP-driven potassium transport (or Kdp) system, which catalyzes the hydrolysis of ATP coupled with the electrogenic transport of potassium into the cytoplasm (PubMed:23930894, PubMed:2849541, PubMed:8499455). This subunit binds the periplasmic potassium ions and delivers the ions to the membrane domain of KdpB through an intramembrane tunnel (PubMed:30478378, PubMed:34272288, PubMed:7896809).</text>
</comment>
<comment type="subunit">
    <text evidence="2 6 8 9 10 14">The system is composed of three essential subunits: KdpA, KdpB and KdpC (PubMed:2849541, PubMed:28636601, PubMed:30478378, PubMed:9858692). The complex also contains KdpF, a small non-essential subunit (PubMed:10608856, PubMed:28636601, PubMed:30478378). The KdpFABC complex exists as a dimer above concentrations of 30-50 nM, whereas the complex exists as a functional monomer at lower concentrations (PubMed:18298081).</text>
</comment>
<comment type="subcellular location">
    <subcellularLocation>
        <location evidence="1 5 8 9 10 12">Cell inner membrane</location>
        <topology evidence="1 9 10 12">Multi-pass membrane protein</topology>
    </subcellularLocation>
</comment>
<comment type="induction">
    <text evidence="4">Transcriptionally regulated by the KdpD/KdpE two-component regulatory system.</text>
</comment>
<comment type="domain">
    <text evidence="9 10 11">A protein-embedded tunnel connects the potassium ion in KdpA to a water molecule at the canonical cation site in the transmembrane domain of KdpB (PubMed:28636601, PubMed:30478378, PubMed:34272288). The structures suggest a translocation pathway for potassium via two inter-subunit half-channels along KdpA and KdpB, integrating KdpB directly in the transport process (PubMed:30478378). The periplasmic potassium ion probably enters the selectivity filter of KdpA, travels through the water-filled tunnel to reach KdpB, and is released to the cytoplasm by KdpB (PubMed:34272288). KdpB undergoes conformational changes, whereas KdpA, KdpC and KdpF remain static (PubMed:34272288).</text>
</comment>
<comment type="miscellaneous">
    <text evidence="12">Has two separate and distinct potassium-binding sites. One site is formed by three periplasmic loops and is inferred to be the site of initial binding. The other site is cytoplasmic.</text>
</comment>
<comment type="similarity">
    <text evidence="1">Belongs to the KdpA family.</text>
</comment>
<reference key="1">
    <citation type="journal article" date="1984" name="Proc. Natl. Acad. Sci. U.S.A.">
        <title>Sequence homology between two membrane transport ATPases, the Kdp-ATPase of Escherichia coli and the Ca2+-ATPase of sarcoplasmic reticulum.</title>
        <authorList>
            <person name="Hesse J.E."/>
            <person name="Wieczorek L."/>
            <person name="Altendorf K."/>
            <person name="Reicin A.S."/>
            <person name="Dorus E."/>
            <person name="Epstein W."/>
        </authorList>
    </citation>
    <scope>NUCLEOTIDE SEQUENCE [GENOMIC DNA]</scope>
</reference>
<reference key="2">
    <citation type="journal article" date="1996" name="DNA Res.">
        <title>A 718-kb DNA sequence of the Escherichia coli K-12 genome corresponding to the 12.7-28.0 min region on the linkage map.</title>
        <authorList>
            <person name="Oshima T."/>
            <person name="Aiba H."/>
            <person name="Baba T."/>
            <person name="Fujita K."/>
            <person name="Hayashi K."/>
            <person name="Honjo A."/>
            <person name="Ikemoto K."/>
            <person name="Inada T."/>
            <person name="Itoh T."/>
            <person name="Kajihara M."/>
            <person name="Kanai K."/>
            <person name="Kashimoto K."/>
            <person name="Kimura S."/>
            <person name="Kitagawa M."/>
            <person name="Makino K."/>
            <person name="Masuda S."/>
            <person name="Miki T."/>
            <person name="Mizobuchi K."/>
            <person name="Mori H."/>
            <person name="Motomura K."/>
            <person name="Nakamura Y."/>
            <person name="Nashimoto H."/>
            <person name="Nishio Y."/>
            <person name="Saito N."/>
            <person name="Sampei G."/>
            <person name="Seki Y."/>
            <person name="Tagami H."/>
            <person name="Takemoto K."/>
            <person name="Wada C."/>
            <person name="Yamamoto Y."/>
            <person name="Yano M."/>
            <person name="Horiuchi T."/>
        </authorList>
    </citation>
    <scope>NUCLEOTIDE SEQUENCE [LARGE SCALE GENOMIC DNA]</scope>
    <source>
        <strain>K12 / W3110 / ATCC 27325 / DSM 5911</strain>
    </source>
</reference>
<reference key="3">
    <citation type="journal article" date="1997" name="Science">
        <title>The complete genome sequence of Escherichia coli K-12.</title>
        <authorList>
            <person name="Blattner F.R."/>
            <person name="Plunkett G. III"/>
            <person name="Bloch C.A."/>
            <person name="Perna N.T."/>
            <person name="Burland V."/>
            <person name="Riley M."/>
            <person name="Collado-Vides J."/>
            <person name="Glasner J.D."/>
            <person name="Rode C.K."/>
            <person name="Mayhew G.F."/>
            <person name="Gregor J."/>
            <person name="Davis N.W."/>
            <person name="Kirkpatrick H.A."/>
            <person name="Goeden M.A."/>
            <person name="Rose D.J."/>
            <person name="Mau B."/>
            <person name="Shao Y."/>
        </authorList>
    </citation>
    <scope>NUCLEOTIDE SEQUENCE [LARGE SCALE GENOMIC DNA]</scope>
    <source>
        <strain>K12 / MG1655 / ATCC 47076</strain>
    </source>
</reference>
<reference key="4">
    <citation type="journal article" date="2006" name="Mol. Syst. Biol.">
        <title>Highly accurate genome sequences of Escherichia coli K-12 strains MG1655 and W3110.</title>
        <authorList>
            <person name="Hayashi K."/>
            <person name="Morooka N."/>
            <person name="Yamamoto Y."/>
            <person name="Fujita K."/>
            <person name="Isono K."/>
            <person name="Choi S."/>
            <person name="Ohtsubo E."/>
            <person name="Baba T."/>
            <person name="Wanner B.L."/>
            <person name="Mori H."/>
            <person name="Horiuchi T."/>
        </authorList>
    </citation>
    <scope>NUCLEOTIDE SEQUENCE [LARGE SCALE GENOMIC DNA]</scope>
    <source>
        <strain>K12 / W3110 / ATCC 27325 / DSM 5911</strain>
    </source>
</reference>
<reference key="5">
    <citation type="journal article" date="1988" name="Eur. J. Biochem.">
        <title>The K+-translocating Kdp-ATPase from Escherichia coli. Purification, enzymatic properties and production of complex- and subunit-specific antisera.</title>
        <authorList>
            <person name="Siebers A."/>
            <person name="Altendorf K."/>
        </authorList>
    </citation>
    <scope>FUNCTION IN POTASSIUM TRANSPORT</scope>
    <scope>SUBUNIT</scope>
    <scope>SUBCELLULAR LOCATION</scope>
</reference>
<reference key="6">
    <citation type="journal article" date="1992" name="J. Bacteriol.">
        <title>The products of the kdpDE operon are required for expression of the Kdp ATPase of Escherichia coli.</title>
        <authorList>
            <person name="Polarek J.W."/>
            <person name="Williams G."/>
            <person name="Epstein W."/>
        </authorList>
    </citation>
    <scope>INDUCTION</scope>
    <source>
        <strain>K12</strain>
    </source>
</reference>
<reference key="7">
    <citation type="journal article" date="1993" name="Biochim. Biophys. Acta">
        <title>ATP-driven potassium transport in right-side-out membrane vesicles via the Kdp system of Escherichia coli.</title>
        <authorList>
            <person name="Kollmann R."/>
            <person name="Altendorf K."/>
        </authorList>
    </citation>
    <scope>FUNCTION IN POTASSIUM TRANSPORT</scope>
    <source>
        <strain>K12</strain>
    </source>
</reference>
<reference key="8">
    <citation type="journal article" date="1995" name="J. Biol. Chem.">
        <title>Genetic evidence for two sequentially occupied K+ binding sites in the Kdp transport ATPase.</title>
        <authorList>
            <person name="Buurman E.T."/>
            <person name="Kim K.T."/>
            <person name="Epstein W."/>
        </authorList>
    </citation>
    <scope>FUNCTION</scope>
    <scope>SUBCELLULAR LOCATION</scope>
    <scope>TOPOLOGY</scope>
    <scope>POTASSIUM-BINDING SITES</scope>
</reference>
<reference key="9">
    <citation type="journal article" date="1998" name="Biochim. Biophys. Acta">
        <title>Assembly of the Kdp complex, the multi-subunit K+-transport ATPase of Escherichia coli.</title>
        <authorList>
            <person name="Gassel M."/>
            <person name="Siebers A."/>
            <person name="Epstein W."/>
            <person name="Altendorf K."/>
        </authorList>
    </citation>
    <scope>SUBUNIT</scope>
    <source>
        <strain>K12</strain>
    </source>
</reference>
<reference key="10">
    <citation type="journal article" date="1999" name="J. Biol. Chem.">
        <title>The KdpF subunit is part of the K(+)-translocating Kdp complex of Escherichia coli and is responsible for stabilization of the complex in vitro.</title>
        <authorList>
            <person name="Gassel M."/>
            <person name="Mollenkamp T."/>
            <person name="Puppe W."/>
            <person name="Altendorf K."/>
        </authorList>
    </citation>
    <scope>SUBUNIT</scope>
    <source>
        <strain>K12</strain>
    </source>
</reference>
<reference key="11">
    <citation type="journal article" date="2002" name="J. Bacteriol.">
        <title>Characterization of amino acid substitutions in KdpA, the K+-binding and -translocating subunit of the KdpFABC complex of Escherichia coli.</title>
        <authorList>
            <person name="van der Laan M."/>
            <person name="Gassel M."/>
            <person name="Altendorf K."/>
        </authorList>
    </citation>
    <scope>MUTAGENESIS OF GLY-232</scope>
</reference>
<reference key="12">
    <citation type="journal article" date="2005" name="Science">
        <title>Global topology analysis of the Escherichia coli inner membrane proteome.</title>
        <authorList>
            <person name="Daley D.O."/>
            <person name="Rapp M."/>
            <person name="Granseth E."/>
            <person name="Melen K."/>
            <person name="Drew D."/>
            <person name="von Heijne G."/>
        </authorList>
    </citation>
    <scope>SUBCELLULAR LOCATION</scope>
    <source>
        <strain>K12 / MG1655 / ATCC 47076</strain>
    </source>
</reference>
<reference key="13">
    <citation type="journal article" date="2008" name="Biochemistry">
        <title>K+-translocating KdpFABC P-type ATPase from Escherichia coli acts as a functional and structural dimer.</title>
        <authorList>
            <person name="Heitkamp T."/>
            <person name="Kalinowski R."/>
            <person name="Boettcher B."/>
            <person name="Boersch M."/>
            <person name="Altendorf K."/>
            <person name="Greie J.C."/>
        </authorList>
    </citation>
    <scope>SUBUNIT</scope>
</reference>
<reference key="14">
    <citation type="journal article" date="2013" name="Biochemistry">
        <title>Mechanistic analysis of the pump cycle of the KdpFABC P-type ATPase.</title>
        <authorList>
            <person name="Damnjanovic B."/>
            <person name="Weber A."/>
            <person name="Potschies M."/>
            <person name="Greie J.C."/>
            <person name="Apell H.J."/>
        </authorList>
    </citation>
    <scope>FUNCTION</scope>
</reference>
<reference evidence="16" key="15">
    <citation type="journal article" date="2017" name="Nature">
        <title>Crystal structure of the potassium-importing KdpFABC membrane complex.</title>
        <authorList>
            <person name="Huang C.S."/>
            <person name="Pedersen B.P."/>
            <person name="Stokes D.L."/>
        </authorList>
    </citation>
    <scope>X-RAY CRYSTALLOGRAPHY (2.90 ANGSTROMS) OF MUTANT ARG-116 IN COMPLEX WITH KDPB; KDPC AND KDPF</scope>
    <scope>SUBUNIT</scope>
    <scope>SUBCELLULAR LOCATION</scope>
    <scope>TOPOLOGY</scope>
    <scope>DOMAIN</scope>
</reference>
<reference evidence="17 18" key="16">
    <citation type="journal article" date="2018" name="Nat. Commun.">
        <title>Cryo-EM structures of KdpFABC suggest a K+ transport mechanism via two inter-subunit half-channels.</title>
        <authorList>
            <person name="Stock C."/>
            <person name="Hielkema L."/>
            <person name="Tascon I."/>
            <person name="Wunnicke D."/>
            <person name="Oostergetel G.T."/>
            <person name="Azkargorta M."/>
            <person name="Paulino C."/>
            <person name="Haenelt I."/>
        </authorList>
    </citation>
    <scope>STRUCTURE BY ELECTRON MICROSCOPY (3.70 ANGSTROMS) OF KDPFABC COMPLEX IN E1 AND E2 STATE</scope>
    <scope>FUNCTION</scope>
    <scope>REACTION MECHANISM</scope>
    <scope>SUBUNIT</scope>
    <scope>SUBCELLULAR LOCATION</scope>
    <scope>DOMAIN</scope>
</reference>
<reference evidence="19 20 21 22 23" key="17">
    <citation type="journal article" date="2021" name="Proc. Natl. Acad. Sci. U.S.A.">
        <title>Structural basis for potassium transport in prokaryotes by KdpFABC.</title>
        <authorList>
            <person name="Sweet M.E."/>
            <person name="Larsen C."/>
            <person name="Zhang X."/>
            <person name="Schlame M."/>
            <person name="Pedersen B.P."/>
            <person name="Stokes D.L."/>
        </authorList>
    </citation>
    <scope>STRUCTURE BY ELECTRON MICROSCOPY (2.90 ANGSTROMS) OF KDPFABC COMPLEX IN MAJOR ENZYMATIC STATES</scope>
    <scope>FUNCTION</scope>
    <scope>REACTION MECHANISM</scope>
    <scope>DOMAIN</scope>
</reference>
<accession>P03959</accession>